<comment type="function">
    <text evidence="1 3">May catalyze the cis-trans isomerization of proline imidic peptide bonds in oligopeptides thereby assisting the folding of proteins. May also function as a chaperone, playing a role in intracellular transport of proteins. May also have a protein ubiquitin ligase activity acting as an E3 ubiquitin protein ligase or as a ubiquitin-ubiquitin ligase promoting elongation of ubiquitin chains on proteins.</text>
</comment>
<comment type="catalytic activity">
    <reaction>
        <text>[protein]-peptidylproline (omega=180) = [protein]-peptidylproline (omega=0)</text>
        <dbReference type="Rhea" id="RHEA:16237"/>
        <dbReference type="Rhea" id="RHEA-COMP:10747"/>
        <dbReference type="Rhea" id="RHEA-COMP:10748"/>
        <dbReference type="ChEBI" id="CHEBI:83833"/>
        <dbReference type="ChEBI" id="CHEBI:83834"/>
        <dbReference type="EC" id="5.2.1.8"/>
    </reaction>
</comment>
<comment type="catalytic activity">
    <reaction evidence="3">
        <text>S-ubiquitinyl-[E2 ubiquitin-conjugating enzyme]-L-cysteine + [acceptor protein]-L-lysine = [E2 ubiquitin-conjugating enzyme]-L-cysteine + N(6)-ubiquitinyl-[acceptor protein]-L-lysine.</text>
        <dbReference type="EC" id="2.3.2.27"/>
    </reaction>
</comment>
<comment type="pathway">
    <text evidence="3">Protein modification; protein ubiquitination.</text>
</comment>
<comment type="subcellular location">
    <subcellularLocation>
        <location evidence="2 3">Nucleus</location>
    </subcellularLocation>
</comment>
<comment type="similarity">
    <text evidence="6">Belongs to the cyclophilin-type PPIase family. PPIL2 subfamily.</text>
</comment>
<comment type="sequence caution" evidence="6">
    <conflict type="erroneous gene model prediction">
        <sequence resource="EMBL-CDS" id="EAL18407"/>
    </conflict>
</comment>
<keyword id="KW-0413">Isomerase</keyword>
<keyword id="KW-0539">Nucleus</keyword>
<keyword id="KW-0697">Rotamase</keyword>
<keyword id="KW-0808">Transferase</keyword>
<keyword id="KW-0833">Ubl conjugation pathway</keyword>
<reference key="1">
    <citation type="journal article" date="2005" name="Science">
        <title>The genome of the basidiomycetous yeast and human pathogen Cryptococcus neoformans.</title>
        <authorList>
            <person name="Loftus B.J."/>
            <person name="Fung E."/>
            <person name="Roncaglia P."/>
            <person name="Rowley D."/>
            <person name="Amedeo P."/>
            <person name="Bruno D."/>
            <person name="Vamathevan J."/>
            <person name="Miranda M."/>
            <person name="Anderson I.J."/>
            <person name="Fraser J.A."/>
            <person name="Allen J.E."/>
            <person name="Bosdet I.E."/>
            <person name="Brent M.R."/>
            <person name="Chiu R."/>
            <person name="Doering T.L."/>
            <person name="Donlin M.J."/>
            <person name="D'Souza C.A."/>
            <person name="Fox D.S."/>
            <person name="Grinberg V."/>
            <person name="Fu J."/>
            <person name="Fukushima M."/>
            <person name="Haas B.J."/>
            <person name="Huang J.C."/>
            <person name="Janbon G."/>
            <person name="Jones S.J.M."/>
            <person name="Koo H.L."/>
            <person name="Krzywinski M.I."/>
            <person name="Kwon-Chung K.J."/>
            <person name="Lengeler K.B."/>
            <person name="Maiti R."/>
            <person name="Marra M.A."/>
            <person name="Marra R.E."/>
            <person name="Mathewson C.A."/>
            <person name="Mitchell T.G."/>
            <person name="Pertea M."/>
            <person name="Riggs F.R."/>
            <person name="Salzberg S.L."/>
            <person name="Schein J.E."/>
            <person name="Shvartsbeyn A."/>
            <person name="Shin H."/>
            <person name="Shumway M."/>
            <person name="Specht C.A."/>
            <person name="Suh B.B."/>
            <person name="Tenney A."/>
            <person name="Utterback T.R."/>
            <person name="Wickes B.L."/>
            <person name="Wortman J.R."/>
            <person name="Wye N.H."/>
            <person name="Kronstad J.W."/>
            <person name="Lodge J.K."/>
            <person name="Heitman J."/>
            <person name="Davis R.W."/>
            <person name="Fraser C.M."/>
            <person name="Hyman R.W."/>
        </authorList>
    </citation>
    <scope>NUCLEOTIDE SEQUENCE [LARGE SCALE GENOMIC DNA]</scope>
    <source>
        <strain>B-3501A</strain>
    </source>
</reference>
<proteinExistence type="inferred from homology"/>
<dbReference type="EC" id="2.3.2.27" evidence="3"/>
<dbReference type="EC" id="5.2.1.8" evidence="1"/>
<dbReference type="EMBL" id="AAEY01000050">
    <property type="protein sequence ID" value="EAL18407.1"/>
    <property type="status" value="ALT_SEQ"/>
    <property type="molecule type" value="Genomic_DNA"/>
</dbReference>
<dbReference type="RefSeq" id="XP_773054.1">
    <property type="nucleotide sequence ID" value="XM_767961.1"/>
</dbReference>
<dbReference type="SMR" id="P0CP91"/>
<dbReference type="EnsemblFungi" id="AAW45760">
    <property type="protein sequence ID" value="AAW45760"/>
    <property type="gene ID" value="CNJ00200"/>
</dbReference>
<dbReference type="GeneID" id="4938677"/>
<dbReference type="KEGG" id="cnb:CNBJ3300"/>
<dbReference type="HOGENOM" id="CLU_012062_7_0_1"/>
<dbReference type="OrthoDB" id="7108at5206"/>
<dbReference type="UniPathway" id="UPA00143"/>
<dbReference type="GO" id="GO:0071013">
    <property type="term" value="C:catalytic step 2 spliceosome"/>
    <property type="evidence" value="ECO:0007669"/>
    <property type="project" value="TreeGrafter"/>
</dbReference>
<dbReference type="GO" id="GO:0003755">
    <property type="term" value="F:peptidyl-prolyl cis-trans isomerase activity"/>
    <property type="evidence" value="ECO:0007669"/>
    <property type="project" value="UniProtKB-KW"/>
</dbReference>
<dbReference type="GO" id="GO:0061630">
    <property type="term" value="F:ubiquitin protein ligase activity"/>
    <property type="evidence" value="ECO:0007669"/>
    <property type="project" value="TreeGrafter"/>
</dbReference>
<dbReference type="GO" id="GO:0006457">
    <property type="term" value="P:protein folding"/>
    <property type="evidence" value="ECO:0007669"/>
    <property type="project" value="InterPro"/>
</dbReference>
<dbReference type="GO" id="GO:0000209">
    <property type="term" value="P:protein polyubiquitination"/>
    <property type="evidence" value="ECO:0007669"/>
    <property type="project" value="TreeGrafter"/>
</dbReference>
<dbReference type="CDD" id="cd01923">
    <property type="entry name" value="cyclophilin_RING"/>
    <property type="match status" value="1"/>
</dbReference>
<dbReference type="CDD" id="cd16663">
    <property type="entry name" value="RING-Ubox_PPIL2"/>
    <property type="match status" value="1"/>
</dbReference>
<dbReference type="FunFam" id="3.30.40.10:FF:000079">
    <property type="entry name" value="Peptidyl-prolyl cis-trans isomerase 2"/>
    <property type="match status" value="1"/>
</dbReference>
<dbReference type="FunFam" id="2.40.100.10:FF:000014">
    <property type="entry name" value="Peptidyl-prolyl cis-trans isomerase cyp65"/>
    <property type="match status" value="1"/>
</dbReference>
<dbReference type="Gene3D" id="2.40.100.10">
    <property type="entry name" value="Cyclophilin-like"/>
    <property type="match status" value="1"/>
</dbReference>
<dbReference type="Gene3D" id="3.30.40.10">
    <property type="entry name" value="Zinc/RING finger domain, C3HC4 (zinc finger)"/>
    <property type="match status" value="1"/>
</dbReference>
<dbReference type="InterPro" id="IPR029000">
    <property type="entry name" value="Cyclophilin-like_dom_sf"/>
</dbReference>
<dbReference type="InterPro" id="IPR020892">
    <property type="entry name" value="Cyclophilin-type_PPIase_CS"/>
</dbReference>
<dbReference type="InterPro" id="IPR002130">
    <property type="entry name" value="Cyclophilin-type_PPIase_dom"/>
</dbReference>
<dbReference type="InterPro" id="IPR044666">
    <property type="entry name" value="Cyclophilin_A-like"/>
</dbReference>
<dbReference type="InterPro" id="IPR026951">
    <property type="entry name" value="PPIL2_U-box_dom"/>
</dbReference>
<dbReference type="InterPro" id="IPR003613">
    <property type="entry name" value="Ubox_domain"/>
</dbReference>
<dbReference type="InterPro" id="IPR013083">
    <property type="entry name" value="Znf_RING/FYVE/PHD"/>
</dbReference>
<dbReference type="PANTHER" id="PTHR45625">
    <property type="entry name" value="PEPTIDYL-PROLYL CIS-TRANS ISOMERASE-RELATED"/>
    <property type="match status" value="1"/>
</dbReference>
<dbReference type="PANTHER" id="PTHR45625:SF1">
    <property type="entry name" value="RING-TYPE E3 UBIQUITIN-PROTEIN LIGASE PPIL2"/>
    <property type="match status" value="1"/>
</dbReference>
<dbReference type="Pfam" id="PF00160">
    <property type="entry name" value="Pro_isomerase"/>
    <property type="match status" value="1"/>
</dbReference>
<dbReference type="PRINTS" id="PR00153">
    <property type="entry name" value="CSAPPISMRASE"/>
</dbReference>
<dbReference type="SMART" id="SM00504">
    <property type="entry name" value="Ubox"/>
    <property type="match status" value="1"/>
</dbReference>
<dbReference type="SUPFAM" id="SSF50891">
    <property type="entry name" value="Cyclophilin-like"/>
    <property type="match status" value="1"/>
</dbReference>
<dbReference type="SUPFAM" id="SSF57850">
    <property type="entry name" value="RING/U-box"/>
    <property type="match status" value="1"/>
</dbReference>
<dbReference type="PROSITE" id="PS00170">
    <property type="entry name" value="CSA_PPIASE_1"/>
    <property type="match status" value="1"/>
</dbReference>
<dbReference type="PROSITE" id="PS50072">
    <property type="entry name" value="CSA_PPIASE_2"/>
    <property type="match status" value="1"/>
</dbReference>
<dbReference type="PROSITE" id="PS51698">
    <property type="entry name" value="U_BOX"/>
    <property type="match status" value="1"/>
</dbReference>
<organism>
    <name type="scientific">Cryptococcus neoformans var. neoformans serotype D (strain B-3501A)</name>
    <name type="common">Filobasidiella neoformans</name>
    <dbReference type="NCBI Taxonomy" id="283643"/>
    <lineage>
        <taxon>Eukaryota</taxon>
        <taxon>Fungi</taxon>
        <taxon>Dikarya</taxon>
        <taxon>Basidiomycota</taxon>
        <taxon>Agaricomycotina</taxon>
        <taxon>Tremellomycetes</taxon>
        <taxon>Tremellales</taxon>
        <taxon>Cryptococcaceae</taxon>
        <taxon>Cryptococcus</taxon>
        <taxon>Cryptococcus neoformans species complex</taxon>
    </lineage>
</organism>
<evidence type="ECO:0000250" key="1">
    <source>
        <dbReference type="UniProtKB" id="Q08752"/>
    </source>
</evidence>
<evidence type="ECO:0000250" key="2">
    <source>
        <dbReference type="UniProtKB" id="Q09928"/>
    </source>
</evidence>
<evidence type="ECO:0000250" key="3">
    <source>
        <dbReference type="UniProtKB" id="Q13356"/>
    </source>
</evidence>
<evidence type="ECO:0000255" key="4">
    <source>
        <dbReference type="PROSITE-ProRule" id="PRU00156"/>
    </source>
</evidence>
<evidence type="ECO:0000256" key="5">
    <source>
        <dbReference type="SAM" id="MobiDB-lite"/>
    </source>
</evidence>
<evidence type="ECO:0000305" key="6"/>
<feature type="chain" id="PRO_0000410205" description="Peptidyl-prolyl cis-trans isomerase-like 2">
    <location>
        <begin position="1"/>
        <end position="573"/>
    </location>
</feature>
<feature type="domain" description="U-box">
    <location>
        <begin position="37"/>
        <end position="119"/>
    </location>
</feature>
<feature type="domain" description="PPIase cyclophilin-type" evidence="4">
    <location>
        <begin position="312"/>
        <end position="469"/>
    </location>
</feature>
<feature type="region of interest" description="Disordered" evidence="5">
    <location>
        <begin position="223"/>
        <end position="247"/>
    </location>
</feature>
<feature type="region of interest" description="Disordered" evidence="5">
    <location>
        <begin position="489"/>
        <end position="515"/>
    </location>
</feature>
<feature type="compositionally biased region" description="Basic and acidic residues" evidence="5">
    <location>
        <begin position="236"/>
        <end position="247"/>
    </location>
</feature>
<feature type="compositionally biased region" description="Basic and acidic residues" evidence="5">
    <location>
        <begin position="489"/>
        <end position="510"/>
    </location>
</feature>
<gene>
    <name type="primary">CYP8</name>
    <name type="ordered locus">CNBJ3300</name>
</gene>
<sequence length="573" mass="63562">MGHNSDKLYVTHSEHAAGSHTASSFGKRQETGKSEFQRLPFDCCALSLQPFKNPVAVISETKAGEAPRADVFDLLNIVPYIRKFKSNPVTGKPLETSQLIKLNFSRNAEGNLHDPITYKVFSPHIHIVFLKNTGNVFDMASLQLLAIKPKTWRDLVNDEPFKRKDIITIQDPENLAARDLREYDYVKKDLKVSEDELAGDPLRGINVDAAGGASKVLKMIAEKNKSGQSPAPTPSKIDDGKGQEKKEGVVAKRKVEQMAYNASNYSSGRAAASLTSTSLMPETKSERAMFDEEEYMFEELSRPTKDKERQKSKAYATITTNFGPLNVELHGDRAPKTVYNFVQLAKAGKYDNVVFHRLIPGFMVQGGDPTGTGRGGESYWGEPFRDEHGEKGAYKHDSRGVLSMANSGPRTNGSQFFFTFRPTPHLDGKHTVFGKLVGGEETLDKIERVNVRPGGDRPVRDIVIQGVTVLQDPFEAYQARLQARLARQDQSDAALKRRAEAQKEREKDRTTWLGTKLGEKGAVGKRRMEEDVGVGKYLKVGGEAGQRTTLDVVDYGVEKKKKKAGGFGDFSGW</sequence>
<protein>
    <recommendedName>
        <fullName evidence="6">Peptidyl-prolyl cis-trans isomerase-like 2</fullName>
        <shortName>PPIase</shortName>
        <ecNumber evidence="3">2.3.2.27</ecNumber>
        <ecNumber evidence="1">5.2.1.8</ecNumber>
    </recommendedName>
    <alternativeName>
        <fullName>Cyclophilin-60</fullName>
    </alternativeName>
    <alternativeName>
        <fullName>Cyclophilin-like protein Cyp-60</fullName>
    </alternativeName>
    <alternativeName>
        <fullName evidence="6">RING-type E3 ubiquitin transferase isomerase-like 2</fullName>
    </alternativeName>
    <alternativeName>
        <fullName>Rotamase</fullName>
    </alternativeName>
</protein>
<name>PPIL2_CRYNB</name>
<accession>P0CP91</accession>
<accession>Q55KK3</accession>
<accession>Q5KAW8</accession>